<feature type="chain" id="PRO_0000314145" description="Opioid growth factor receptor-like protein 1">
    <location>
        <begin position="1"/>
        <end position="512"/>
    </location>
</feature>
<feature type="region of interest" description="Disordered" evidence="1">
    <location>
        <begin position="1"/>
        <end position="72"/>
    </location>
</feature>
<feature type="region of interest" description="Disordered" evidence="1">
    <location>
        <begin position="323"/>
        <end position="469"/>
    </location>
</feature>
<feature type="region of interest" description="Disordered" evidence="1">
    <location>
        <begin position="488"/>
        <end position="512"/>
    </location>
</feature>
<feature type="compositionally biased region" description="Acidic residues" evidence="1">
    <location>
        <begin position="28"/>
        <end position="54"/>
    </location>
</feature>
<feature type="compositionally biased region" description="Acidic residues" evidence="1">
    <location>
        <begin position="62"/>
        <end position="71"/>
    </location>
</feature>
<feature type="compositionally biased region" description="Basic and acidic residues" evidence="1">
    <location>
        <begin position="328"/>
        <end position="337"/>
    </location>
</feature>
<feature type="compositionally biased region" description="Basic residues" evidence="1">
    <location>
        <begin position="347"/>
        <end position="361"/>
    </location>
</feature>
<feature type="compositionally biased region" description="Polar residues" evidence="1">
    <location>
        <begin position="408"/>
        <end position="421"/>
    </location>
</feature>
<feature type="compositionally biased region" description="Basic and acidic residues" evidence="1">
    <location>
        <begin position="449"/>
        <end position="468"/>
    </location>
</feature>
<feature type="compositionally biased region" description="Polar residues" evidence="1">
    <location>
        <begin position="490"/>
        <end position="499"/>
    </location>
</feature>
<keyword id="KW-1185">Reference proteome</keyword>
<name>OGRL1_XENTR</name>
<evidence type="ECO:0000256" key="1">
    <source>
        <dbReference type="SAM" id="MobiDB-lite"/>
    </source>
</evidence>
<evidence type="ECO:0000305" key="2"/>
<accession>A2VCV0</accession>
<protein>
    <recommendedName>
        <fullName>Opioid growth factor receptor-like protein 1</fullName>
    </recommendedName>
</protein>
<organism>
    <name type="scientific">Xenopus tropicalis</name>
    <name type="common">Western clawed frog</name>
    <name type="synonym">Silurana tropicalis</name>
    <dbReference type="NCBI Taxonomy" id="8364"/>
    <lineage>
        <taxon>Eukaryota</taxon>
        <taxon>Metazoa</taxon>
        <taxon>Chordata</taxon>
        <taxon>Craniata</taxon>
        <taxon>Vertebrata</taxon>
        <taxon>Euteleostomi</taxon>
        <taxon>Amphibia</taxon>
        <taxon>Batrachia</taxon>
        <taxon>Anura</taxon>
        <taxon>Pipoidea</taxon>
        <taxon>Pipidae</taxon>
        <taxon>Xenopodinae</taxon>
        <taxon>Xenopus</taxon>
        <taxon>Silurana</taxon>
    </lineage>
</organism>
<comment type="similarity">
    <text evidence="2">Belongs to the opioid growth factor receptor family.</text>
</comment>
<gene>
    <name type="primary">ogfrl1</name>
</gene>
<reference key="1">
    <citation type="submission" date="2006-12" db="EMBL/GenBank/DDBJ databases">
        <authorList>
            <consortium name="NIH - Xenopus Gene Collection (XGC) project"/>
        </authorList>
    </citation>
    <scope>NUCLEOTIDE SEQUENCE [LARGE SCALE MRNA]</scope>
    <source>
        <strain>N6</strain>
        <tissue>Skeletal muscle</tissue>
    </source>
</reference>
<sequence>MGNIFSVANFKEPTTVEDCDSTWNTDSGGEEEQQEAEEEEESEGTEQREDDNEEEVIKQEETNEGGEEETGTETLIAEVKAVIHNPEQGDSSTVEQNIKPKRSFYAARDLYKYRHQYPQNIKDLRSPNDLCNLRFYMNKIPFKPDGVNIEEILNKWKGDYEKLEHNHTYIQWLFPLREQGLNFYAKELTSYEIEEFKKTKEAVKRFIVAYKMMLDFFGIELSDKNGNVSRAPNCQERFQHLNESQHNYLRITRILKSLGELGYENFKPPLVKLFLQESIVANTIPNMKQSALEYFVYTIKDRRQRRKLLRFACYHYEPPEHFIWGPPDKQKADENKATKKTTTPSSQKKHSHVEKKSRPAKSIKAPESPAVQHDEEKGTETMQTAEIHRQATAEVISVNETEVCDDGTVTSENNSSKTGQTEACDDGTVTAEDSSSKAEETDSGNSETRSLDTEHDLKRPEADRETCCKENIVVVEYTEKESKDCLCSLSPGTSNSNVTELKVEGSETGPFT</sequence>
<proteinExistence type="evidence at transcript level"/>
<dbReference type="EMBL" id="BC128651">
    <property type="protein sequence ID" value="AAI28652.1"/>
    <property type="molecule type" value="mRNA"/>
</dbReference>
<dbReference type="RefSeq" id="NP_001090756.1">
    <property type="nucleotide sequence ID" value="NM_001097287.1"/>
</dbReference>
<dbReference type="FunCoup" id="A2VCV0">
    <property type="interactions" value="41"/>
</dbReference>
<dbReference type="STRING" id="8364.ENSXETP00000016657"/>
<dbReference type="PaxDb" id="8364-ENSXETP00000004944"/>
<dbReference type="DNASU" id="100037841"/>
<dbReference type="GeneID" id="100037841"/>
<dbReference type="KEGG" id="xtr:100037841"/>
<dbReference type="AGR" id="Xenbase:XB-GENE-940365"/>
<dbReference type="CTD" id="79627"/>
<dbReference type="Xenbase" id="XB-GENE-940365">
    <property type="gene designation" value="ogfrl1"/>
</dbReference>
<dbReference type="eggNOG" id="ENOG502RA9J">
    <property type="taxonomic scope" value="Eukaryota"/>
</dbReference>
<dbReference type="InParanoid" id="A2VCV0"/>
<dbReference type="OMA" id="CTNNIVI"/>
<dbReference type="OrthoDB" id="9030204at2759"/>
<dbReference type="Proteomes" id="UP000008143">
    <property type="component" value="Chromosome 5"/>
</dbReference>
<dbReference type="Bgee" id="ENSXETG00000037906">
    <property type="expression patterns" value="Expressed in brain and 16 other cell types or tissues"/>
</dbReference>
<dbReference type="GO" id="GO:0016020">
    <property type="term" value="C:membrane"/>
    <property type="evidence" value="ECO:0007669"/>
    <property type="project" value="InterPro"/>
</dbReference>
<dbReference type="GO" id="GO:0140625">
    <property type="term" value="F:opioid growth factor receptor activity"/>
    <property type="evidence" value="ECO:0007669"/>
    <property type="project" value="InterPro"/>
</dbReference>
<dbReference type="InterPro" id="IPR006757">
    <property type="entry name" value="OGF_rcpt"/>
</dbReference>
<dbReference type="InterPro" id="IPR039574">
    <property type="entry name" value="OGFr"/>
</dbReference>
<dbReference type="PANTHER" id="PTHR14015">
    <property type="entry name" value="OPIOID GROWTH FACTOR RECEPTOR OGFR ZETA-TYPE OPIOID RECEPTOR"/>
    <property type="match status" value="1"/>
</dbReference>
<dbReference type="PANTHER" id="PTHR14015:SF0">
    <property type="entry name" value="OPIOID GROWTH FACTOR RECEPTOR-LIKE PROTEIN 1"/>
    <property type="match status" value="1"/>
</dbReference>
<dbReference type="Pfam" id="PF04664">
    <property type="entry name" value="OGFr_N"/>
    <property type="match status" value="1"/>
</dbReference>